<keyword id="KW-0012">Acyltransferase</keyword>
<keyword id="KW-0472">Membrane</keyword>
<keyword id="KW-1185">Reference proteome</keyword>
<keyword id="KW-0808">Transferase</keyword>
<keyword id="KW-0812">Transmembrane</keyword>
<keyword id="KW-1133">Transmembrane helix</keyword>
<gene>
    <name evidence="8" type="primary">KCS5</name>
    <name evidence="7" type="synonym">CER60</name>
    <name evidence="10" type="ordered locus">At1g25450</name>
    <name evidence="11" type="ORF">F2J7.9</name>
</gene>
<proteinExistence type="evidence at transcript level"/>
<comment type="function">
    <text evidence="4">Mediates mostly the synthesis of VLCFAs from 26 to 30 carbons in length (e.g. C20:1, C26, C28, C30).</text>
</comment>
<comment type="catalytic activity">
    <reaction evidence="9">
        <text>a very-long-chain acyl-CoA + malonyl-CoA + H(+) = a very-long-chain 3-oxoacyl-CoA + CO2 + CoA</text>
        <dbReference type="Rhea" id="RHEA:32727"/>
        <dbReference type="ChEBI" id="CHEBI:15378"/>
        <dbReference type="ChEBI" id="CHEBI:16526"/>
        <dbReference type="ChEBI" id="CHEBI:57287"/>
        <dbReference type="ChEBI" id="CHEBI:57384"/>
        <dbReference type="ChEBI" id="CHEBI:90725"/>
        <dbReference type="ChEBI" id="CHEBI:90736"/>
        <dbReference type="EC" id="2.3.1.199"/>
    </reaction>
</comment>
<comment type="activity regulation">
    <text evidence="4 6">Inhibited by K3 herbicides such as alachlor, allidochlor, anilofos, cafenstrole and flufenacet (PubMed:15277688). Strongly inhibited by metazachlor and mefluidide (PubMed:22284369).</text>
</comment>
<comment type="pathway">
    <text>Lipid metabolism; fatty acid biosynthesis.</text>
</comment>
<comment type="subcellular location">
    <subcellularLocation>
        <location evidence="4">Membrane</location>
        <topology evidence="4">Multi-pass membrane protein</topology>
    </subcellularLocation>
</comment>
<comment type="tissue specificity">
    <text evidence="5">Expressed in siliques, flowers, leaves and seedlings.</text>
</comment>
<comment type="induction">
    <text evidence="3 5">Repressed by herbicides such as flufenacet and benfuresate (PubMed:12916765). Down-regulated by darkness, low temperature, salt, drought and osmotic stress (PubMed:18465198).</text>
</comment>
<comment type="similarity">
    <text evidence="9">Belongs to the thiolase-like superfamily. Chalcone/stilbene synthases family.</text>
</comment>
<organism>
    <name type="scientific">Arabidopsis thaliana</name>
    <name type="common">Mouse-ear cress</name>
    <dbReference type="NCBI Taxonomy" id="3702"/>
    <lineage>
        <taxon>Eukaryota</taxon>
        <taxon>Viridiplantae</taxon>
        <taxon>Streptophyta</taxon>
        <taxon>Embryophyta</taxon>
        <taxon>Tracheophyta</taxon>
        <taxon>Spermatophyta</taxon>
        <taxon>Magnoliopsida</taxon>
        <taxon>eudicotyledons</taxon>
        <taxon>Gunneridae</taxon>
        <taxon>Pentapetalae</taxon>
        <taxon>rosids</taxon>
        <taxon>malvids</taxon>
        <taxon>Brassicales</taxon>
        <taxon>Brassicaceae</taxon>
        <taxon>Camelineae</taxon>
        <taxon>Arabidopsis</taxon>
    </lineage>
</organism>
<protein>
    <recommendedName>
        <fullName evidence="8">3-ketoacyl-CoA synthase 5</fullName>
        <shortName evidence="8">KCS-5</shortName>
        <ecNumber evidence="9">2.3.1.199</ecNumber>
    </recommendedName>
    <alternativeName>
        <fullName evidence="7">Eceriferum 60</fullName>
    </alternativeName>
    <alternativeName>
        <fullName evidence="8">Very long-chain fatty acid condensing enzyme 5</fullName>
        <shortName evidence="8">VLCFA condensing enzyme 5</shortName>
    </alternativeName>
</protein>
<reference key="1">
    <citation type="journal article" date="2000" name="Plant Cell">
        <title>Alterations in CER6, a gene identical to CUT1, differentially affect long-chain lipid content on the surface of pollen and stems.</title>
        <authorList>
            <person name="Fiebig A."/>
            <person name="Mayfield J.A."/>
            <person name="Miley N.L."/>
            <person name="Chau S."/>
            <person name="Fischer R.L."/>
            <person name="Preuss D."/>
        </authorList>
    </citation>
    <scope>NUCLEOTIDE SEQUENCE [MRNA]</scope>
</reference>
<reference key="2">
    <citation type="journal article" date="2000" name="Nature">
        <title>Sequence and analysis of chromosome 1 of the plant Arabidopsis thaliana.</title>
        <authorList>
            <person name="Theologis A."/>
            <person name="Ecker J.R."/>
            <person name="Palm C.J."/>
            <person name="Federspiel N.A."/>
            <person name="Kaul S."/>
            <person name="White O."/>
            <person name="Alonso J."/>
            <person name="Altafi H."/>
            <person name="Araujo R."/>
            <person name="Bowman C.L."/>
            <person name="Brooks S.Y."/>
            <person name="Buehler E."/>
            <person name="Chan A."/>
            <person name="Chao Q."/>
            <person name="Chen H."/>
            <person name="Cheuk R.F."/>
            <person name="Chin C.W."/>
            <person name="Chung M.K."/>
            <person name="Conn L."/>
            <person name="Conway A.B."/>
            <person name="Conway A.R."/>
            <person name="Creasy T.H."/>
            <person name="Dewar K."/>
            <person name="Dunn P."/>
            <person name="Etgu P."/>
            <person name="Feldblyum T.V."/>
            <person name="Feng J.-D."/>
            <person name="Fong B."/>
            <person name="Fujii C.Y."/>
            <person name="Gill J.E."/>
            <person name="Goldsmith A.D."/>
            <person name="Haas B."/>
            <person name="Hansen N.F."/>
            <person name="Hughes B."/>
            <person name="Huizar L."/>
            <person name="Hunter J.L."/>
            <person name="Jenkins J."/>
            <person name="Johnson-Hopson C."/>
            <person name="Khan S."/>
            <person name="Khaykin E."/>
            <person name="Kim C.J."/>
            <person name="Koo H.L."/>
            <person name="Kremenetskaia I."/>
            <person name="Kurtz D.B."/>
            <person name="Kwan A."/>
            <person name="Lam B."/>
            <person name="Langin-Hooper S."/>
            <person name="Lee A."/>
            <person name="Lee J.M."/>
            <person name="Lenz C.A."/>
            <person name="Li J.H."/>
            <person name="Li Y.-P."/>
            <person name="Lin X."/>
            <person name="Liu S.X."/>
            <person name="Liu Z.A."/>
            <person name="Luros J.S."/>
            <person name="Maiti R."/>
            <person name="Marziali A."/>
            <person name="Militscher J."/>
            <person name="Miranda M."/>
            <person name="Nguyen M."/>
            <person name="Nierman W.C."/>
            <person name="Osborne B.I."/>
            <person name="Pai G."/>
            <person name="Peterson J."/>
            <person name="Pham P.K."/>
            <person name="Rizzo M."/>
            <person name="Rooney T."/>
            <person name="Rowley D."/>
            <person name="Sakano H."/>
            <person name="Salzberg S.L."/>
            <person name="Schwartz J.R."/>
            <person name="Shinn P."/>
            <person name="Southwick A.M."/>
            <person name="Sun H."/>
            <person name="Tallon L.J."/>
            <person name="Tambunga G."/>
            <person name="Toriumi M.J."/>
            <person name="Town C.D."/>
            <person name="Utterback T."/>
            <person name="Van Aken S."/>
            <person name="Vaysberg M."/>
            <person name="Vysotskaia V.S."/>
            <person name="Walker M."/>
            <person name="Wu D."/>
            <person name="Yu G."/>
            <person name="Fraser C.M."/>
            <person name="Venter J.C."/>
            <person name="Davis R.W."/>
        </authorList>
    </citation>
    <scope>NUCLEOTIDE SEQUENCE [LARGE SCALE GENOMIC DNA]</scope>
    <source>
        <strain>cv. Columbia</strain>
    </source>
</reference>
<reference key="3">
    <citation type="journal article" date="2017" name="Plant J.">
        <title>Araport11: a complete reannotation of the Arabidopsis thaliana reference genome.</title>
        <authorList>
            <person name="Cheng C.Y."/>
            <person name="Krishnakumar V."/>
            <person name="Chan A.P."/>
            <person name="Thibaud-Nissen F."/>
            <person name="Schobel S."/>
            <person name="Town C.D."/>
        </authorList>
    </citation>
    <scope>GENOME REANNOTATION</scope>
    <source>
        <strain>cv. Columbia</strain>
    </source>
</reference>
<reference key="4">
    <citation type="journal article" date="2003" name="Science">
        <title>Empirical analysis of transcriptional activity in the Arabidopsis genome.</title>
        <authorList>
            <person name="Yamada K."/>
            <person name="Lim J."/>
            <person name="Dale J.M."/>
            <person name="Chen H."/>
            <person name="Shinn P."/>
            <person name="Palm C.J."/>
            <person name="Southwick A.M."/>
            <person name="Wu H.C."/>
            <person name="Kim C.J."/>
            <person name="Nguyen M."/>
            <person name="Pham P.K."/>
            <person name="Cheuk R.F."/>
            <person name="Karlin-Newmann G."/>
            <person name="Liu S.X."/>
            <person name="Lam B."/>
            <person name="Sakano H."/>
            <person name="Wu T."/>
            <person name="Yu G."/>
            <person name="Miranda M."/>
            <person name="Quach H.L."/>
            <person name="Tripp M."/>
            <person name="Chang C.H."/>
            <person name="Lee J.M."/>
            <person name="Toriumi M.J."/>
            <person name="Chan M.M."/>
            <person name="Tang C.C."/>
            <person name="Onodera C.S."/>
            <person name="Deng J.M."/>
            <person name="Akiyama K."/>
            <person name="Ansari Y."/>
            <person name="Arakawa T."/>
            <person name="Banh J."/>
            <person name="Banno F."/>
            <person name="Bowser L."/>
            <person name="Brooks S.Y."/>
            <person name="Carninci P."/>
            <person name="Chao Q."/>
            <person name="Choy N."/>
            <person name="Enju A."/>
            <person name="Goldsmith A.D."/>
            <person name="Gurjal M."/>
            <person name="Hansen N.F."/>
            <person name="Hayashizaki Y."/>
            <person name="Johnson-Hopson C."/>
            <person name="Hsuan V.W."/>
            <person name="Iida K."/>
            <person name="Karnes M."/>
            <person name="Khan S."/>
            <person name="Koesema E."/>
            <person name="Ishida J."/>
            <person name="Jiang P.X."/>
            <person name="Jones T."/>
            <person name="Kawai J."/>
            <person name="Kamiya A."/>
            <person name="Meyers C."/>
            <person name="Nakajima M."/>
            <person name="Narusaka M."/>
            <person name="Seki M."/>
            <person name="Sakurai T."/>
            <person name="Satou M."/>
            <person name="Tamse R."/>
            <person name="Vaysberg M."/>
            <person name="Wallender E.K."/>
            <person name="Wong C."/>
            <person name="Yamamura Y."/>
            <person name="Yuan S."/>
            <person name="Shinozaki K."/>
            <person name="Davis R.W."/>
            <person name="Theologis A."/>
            <person name="Ecker J.R."/>
        </authorList>
    </citation>
    <scope>NUCLEOTIDE SEQUENCE [LARGE SCALE MRNA]</scope>
    <source>
        <strain>cv. Columbia</strain>
    </source>
</reference>
<reference key="5">
    <citation type="submission" date="2002-03" db="EMBL/GenBank/DDBJ databases">
        <title>Full-length cDNA from Arabidopsis thaliana.</title>
        <authorList>
            <person name="Brover V.V."/>
            <person name="Troukhan M.E."/>
            <person name="Alexandrov N.A."/>
            <person name="Lu Y.-P."/>
            <person name="Flavell R.B."/>
            <person name="Feldmann K.A."/>
        </authorList>
    </citation>
    <scope>NUCLEOTIDE SEQUENCE [LARGE SCALE MRNA]</scope>
</reference>
<reference key="6">
    <citation type="journal article" date="2003" name="Pest Manag. Sci.">
        <title>Flufenacet herbicide treatment phenocopies the fiddlehead mutant in Arabidopsis thaliana.</title>
        <authorList>
            <person name="Lechelt-Kunze C."/>
            <person name="Meissner R.C."/>
            <person name="Drewes M."/>
            <person name="Tietjen K."/>
        </authorList>
    </citation>
    <scope>INDUCTION</scope>
    <scope>GENE FAMILY</scope>
</reference>
<reference key="7">
    <citation type="journal article" date="2004" name="Proc. Natl. Acad. Sci. U.S.A.">
        <title>Specific and differential inhibition of very-long-chain fatty acid elongases from Arabidopsis thaliana by different herbicides.</title>
        <authorList>
            <person name="Trenkamp S."/>
            <person name="Martin W."/>
            <person name="Tietjen K."/>
        </authorList>
    </citation>
    <scope>FUNCTION</scope>
    <scope>SUBCELLULAR LOCATION</scope>
    <scope>ACTIVITY REGULATION</scope>
</reference>
<reference key="8">
    <citation type="journal article" date="2008" name="Plant Mol. Biol.">
        <title>The VLCFA elongase gene family in Arabidopsis thaliana: phylogenetic analysis, 3D modelling and expression profiling.</title>
        <authorList>
            <person name="Joubes J."/>
            <person name="Raffaele S."/>
            <person name="Bourdenx B."/>
            <person name="Garcia C."/>
            <person name="Laroche-Traineau J."/>
            <person name="Moreau P."/>
            <person name="Domergue F."/>
            <person name="Lessire R."/>
        </authorList>
    </citation>
    <scope>GENE FAMILY</scope>
    <scope>NOMENCLATURE</scope>
    <scope>3D-STRUCTURE MODELING</scope>
    <scope>TISSUE SPECIFICITY</scope>
    <scope>INDUCTION</scope>
</reference>
<reference key="9">
    <citation type="journal article" date="2012" name="Phytochemistry">
        <title>Inhibition of saturated very-long-chain fatty acid biosynthesis by mefluidide and perfluidone, selective inhibitors of 3-ketoacyl-CoA synthases.</title>
        <authorList>
            <person name="Tresch S."/>
            <person name="Heilmann M."/>
            <person name="Christiansen N."/>
            <person name="Looser R."/>
            <person name="Grossmann K."/>
        </authorList>
    </citation>
    <scope>ACTIVITY REGULATION</scope>
</reference>
<name>KCS5_ARATH</name>
<feature type="chain" id="PRO_0000249097" description="3-ketoacyl-CoA synthase 5">
    <location>
        <begin position="1"/>
        <end position="492"/>
    </location>
</feature>
<feature type="transmembrane region" description="Helical" evidence="2">
    <location>
        <begin position="20"/>
        <end position="40"/>
    </location>
</feature>
<feature type="transmembrane region" description="Helical" evidence="2">
    <location>
        <begin position="59"/>
        <end position="79"/>
    </location>
</feature>
<feature type="domain" description="FAE" evidence="2">
    <location>
        <begin position="76"/>
        <end position="365"/>
    </location>
</feature>
<feature type="active site" evidence="1">
    <location>
        <position position="220"/>
    </location>
</feature>
<feature type="active site" evidence="1">
    <location>
        <position position="299"/>
    </location>
</feature>
<feature type="active site" evidence="1">
    <location>
        <position position="383"/>
    </location>
</feature>
<feature type="active site" evidence="1">
    <location>
        <position position="387"/>
    </location>
</feature>
<feature type="active site" evidence="1">
    <location>
        <position position="416"/>
    </location>
</feature>
<feature type="active site" evidence="1">
    <location>
        <position position="420"/>
    </location>
</feature>
<feature type="sequence conflict" description="In Ref. 5; AAM67234." evidence="9" ref="5">
    <original>D</original>
    <variation>N</variation>
    <location>
        <position position="232"/>
    </location>
</feature>
<feature type="sequence conflict" description="In Ref. 4; AAO42223." evidence="9" ref="4">
    <original>F</original>
    <variation>S</variation>
    <location>
        <position position="356"/>
    </location>
</feature>
<evidence type="ECO:0000250" key="1">
    <source>
        <dbReference type="UniProtKB" id="Q38860"/>
    </source>
</evidence>
<evidence type="ECO:0000255" key="2"/>
<evidence type="ECO:0000269" key="3">
    <source>
    </source>
</evidence>
<evidence type="ECO:0000269" key="4">
    <source>
    </source>
</evidence>
<evidence type="ECO:0000269" key="5">
    <source>
    </source>
</evidence>
<evidence type="ECO:0000269" key="6">
    <source>
    </source>
</evidence>
<evidence type="ECO:0000303" key="7">
    <source>
    </source>
</evidence>
<evidence type="ECO:0000303" key="8">
    <source>
    </source>
</evidence>
<evidence type="ECO:0000305" key="9"/>
<evidence type="ECO:0000312" key="10">
    <source>
        <dbReference type="Araport" id="AT1G25450"/>
    </source>
</evidence>
<evidence type="ECO:0000312" key="11">
    <source>
        <dbReference type="EMBL" id="AAG50800.1"/>
    </source>
</evidence>
<dbReference type="EC" id="2.3.1.199" evidence="9"/>
<dbReference type="EMBL" id="AC079281">
    <property type="protein sequence ID" value="AAG50800.1"/>
    <property type="molecule type" value="Genomic_DNA"/>
</dbReference>
<dbReference type="EMBL" id="CP002684">
    <property type="protein sequence ID" value="AEE30626.1"/>
    <property type="molecule type" value="Genomic_DNA"/>
</dbReference>
<dbReference type="EMBL" id="BT004205">
    <property type="protein sequence ID" value="AAO42223.1"/>
    <property type="molecule type" value="mRNA"/>
</dbReference>
<dbReference type="EMBL" id="AY088928">
    <property type="protein sequence ID" value="AAM67234.1"/>
    <property type="molecule type" value="mRNA"/>
</dbReference>
<dbReference type="PIR" id="F86384">
    <property type="entry name" value="F86384"/>
</dbReference>
<dbReference type="RefSeq" id="NP_173916.1">
    <property type="nucleotide sequence ID" value="NM_102356.4"/>
</dbReference>
<dbReference type="SMR" id="Q9C6L5"/>
<dbReference type="BioGRID" id="24368">
    <property type="interactions" value="1"/>
</dbReference>
<dbReference type="FunCoup" id="Q9C6L5">
    <property type="interactions" value="205"/>
</dbReference>
<dbReference type="STRING" id="3702.Q9C6L5"/>
<dbReference type="ChEMBL" id="CHEMBL2242737"/>
<dbReference type="GlyGen" id="Q9C6L5">
    <property type="glycosylation" value="2 sites"/>
</dbReference>
<dbReference type="PaxDb" id="3702-AT1G25450.1"/>
<dbReference type="ProteomicsDB" id="247273"/>
<dbReference type="EnsemblPlants" id="AT1G25450.1">
    <property type="protein sequence ID" value="AT1G25450.1"/>
    <property type="gene ID" value="AT1G25450"/>
</dbReference>
<dbReference type="GeneID" id="839131"/>
<dbReference type="Gramene" id="AT1G25450.1">
    <property type="protein sequence ID" value="AT1G25450.1"/>
    <property type="gene ID" value="AT1G25450"/>
</dbReference>
<dbReference type="KEGG" id="ath:AT1G25450"/>
<dbReference type="Araport" id="AT1G25450"/>
<dbReference type="TAIR" id="AT1G25450">
    <property type="gene designation" value="KCS5"/>
</dbReference>
<dbReference type="eggNOG" id="ENOG502QPKZ">
    <property type="taxonomic scope" value="Eukaryota"/>
</dbReference>
<dbReference type="HOGENOM" id="CLU_013238_2_2_1"/>
<dbReference type="InParanoid" id="Q9C6L5"/>
<dbReference type="OMA" id="SAVWKSN"/>
<dbReference type="PhylomeDB" id="Q9C6L5"/>
<dbReference type="BioCyc" id="ARA:AT1G25450-MONOMER"/>
<dbReference type="UniPathway" id="UPA00094"/>
<dbReference type="PRO" id="PR:Q9C6L5"/>
<dbReference type="Proteomes" id="UP000006548">
    <property type="component" value="Chromosome 1"/>
</dbReference>
<dbReference type="ExpressionAtlas" id="Q9C6L5">
    <property type="expression patterns" value="baseline and differential"/>
</dbReference>
<dbReference type="GO" id="GO:0005783">
    <property type="term" value="C:endoplasmic reticulum"/>
    <property type="evidence" value="ECO:0000314"/>
    <property type="project" value="TAIR"/>
</dbReference>
<dbReference type="GO" id="GO:0016020">
    <property type="term" value="C:membrane"/>
    <property type="evidence" value="ECO:0007669"/>
    <property type="project" value="UniProtKB-SubCell"/>
</dbReference>
<dbReference type="GO" id="GO:0009922">
    <property type="term" value="F:fatty acid elongase activity"/>
    <property type="evidence" value="ECO:0000314"/>
    <property type="project" value="TAIR"/>
</dbReference>
<dbReference type="GO" id="GO:0006633">
    <property type="term" value="P:fatty acid biosynthetic process"/>
    <property type="evidence" value="ECO:0007669"/>
    <property type="project" value="UniProtKB-UniPathway"/>
</dbReference>
<dbReference type="GO" id="GO:0048868">
    <property type="term" value="P:pollen tube development"/>
    <property type="evidence" value="ECO:0000315"/>
    <property type="project" value="TAIR"/>
</dbReference>
<dbReference type="GO" id="GO:0009409">
    <property type="term" value="P:response to cold"/>
    <property type="evidence" value="ECO:0000270"/>
    <property type="project" value="TAIR"/>
</dbReference>
<dbReference type="GO" id="GO:0009416">
    <property type="term" value="P:response to light stimulus"/>
    <property type="evidence" value="ECO:0000270"/>
    <property type="project" value="TAIR"/>
</dbReference>
<dbReference type="CDD" id="cd00831">
    <property type="entry name" value="CHS_like"/>
    <property type="match status" value="1"/>
</dbReference>
<dbReference type="FunFam" id="3.40.47.10:FF:000028">
    <property type="entry name" value="3-ketoacyl-CoA synthase"/>
    <property type="match status" value="1"/>
</dbReference>
<dbReference type="Gene3D" id="3.40.47.10">
    <property type="match status" value="1"/>
</dbReference>
<dbReference type="InterPro" id="IPR012392">
    <property type="entry name" value="3-ktacl-CoA_syn"/>
</dbReference>
<dbReference type="InterPro" id="IPR013747">
    <property type="entry name" value="ACP_syn_III_C"/>
</dbReference>
<dbReference type="InterPro" id="IPR013601">
    <property type="entry name" value="FAE1_typ3_polyketide_synth"/>
</dbReference>
<dbReference type="InterPro" id="IPR016039">
    <property type="entry name" value="Thiolase-like"/>
</dbReference>
<dbReference type="PANTHER" id="PTHR31561">
    <property type="entry name" value="3-KETOACYL-COA SYNTHASE"/>
    <property type="match status" value="1"/>
</dbReference>
<dbReference type="Pfam" id="PF08541">
    <property type="entry name" value="ACP_syn_III_C"/>
    <property type="match status" value="1"/>
</dbReference>
<dbReference type="Pfam" id="PF08392">
    <property type="entry name" value="FAE1_CUT1_RppA"/>
    <property type="match status" value="1"/>
</dbReference>
<dbReference type="PIRSF" id="PIRSF036417">
    <property type="entry name" value="3-ktacl-CoA_syn"/>
    <property type="match status" value="1"/>
</dbReference>
<dbReference type="SUPFAM" id="SSF53901">
    <property type="entry name" value="Thiolase-like"/>
    <property type="match status" value="2"/>
</dbReference>
<accession>Q9C6L5</accession>
<accession>Q84W57</accession>
<accession>Q8L8L0</accession>
<sequence length="492" mass="55653">MSDFSSSVKLKYVKLGYQYLINNFLTLLLIPVIATVAIELLRMGPEEILSVLNSLHFELLHILCSSFLIIFVSTVYFMSKPRTVYLVDYSCYKPPVTCRVPFSSFMEHSRLILKDNPKSVEFQMRILERSGLGEETCLPPAIHYIPPTPTMESARNEAQMVIFTAMEDLFKNTGLKPKDIDILIVNCSLFSPTPSLSAMIINKYKLRSNIKSYNLSGMGCSASLISVDVARDLLQVHPNSNAIIISTEIITPNYYKGNERAMLLPNCLFRMGGAAILLSNRRSDRWRAKYKLCHLVRTHRGADDKSYNCVMEQEDKNGNVGINLSKDLMTIAGEALKANITTIGPLVLPASEQLLFLSSLIGRKIFNPKWKPYIPDFKQAFEHFCIHAGGRAVIDELQKNLQLSGEHVEASRMTLHRFGNTSSSSLWYELSYIEAQGRMKRNDRVWQIAFGSGFKCNSAVWKCNRTIKTPTDGAWSDCIERYPVFIPEVVKL</sequence>